<sequence>MQQRRPVRRALLSVSDKAGIVEFAQALSARGVELLSTGGTARLLAEKGLPVTEVSDYTGFPEMMDGRVKTLHPKVHGGILGRRGQDDAIMEEHQIQPIDMVVVNLYPFAQTVAREGCSLEDAVENIDIGGPTMVRSAAKNHKDVAIVVKSSDYDAIIKEMDANEGSLTLATRFDLAIKAFEHTAAYDSMIANYFGSMVPAYHGESKEAAGRFPRTLNLNFIKKQDMRYGENSHQQAAFYIEENVKEASVATATQVQGKALSYNNIADTDAALECVKEFAEPACVIVKHANPCGVAIGNSILDAYDRAYKTDPTSAFGGIIAFNRELDAETAQAIISRQFVEVIIAPSASEEALKITAAKQNVRVLTCGQWGERVPGLDFKRVNGGLLVQDRDLGMVGAEELRVVTKRQPTEQELRDALFCWKVAKFVKSNAIVYAKNNMTIGIGAGQMSRVYSAKIAGIKAADEGLEVKGSSMASDAFFPFRDGIDAAAAAGVTCVIQPGGSIRDDEVIAAADEHGIAMLFTDMRHFRH</sequence>
<dbReference type="EC" id="2.1.2.3" evidence="1"/>
<dbReference type="EC" id="3.5.4.10" evidence="1"/>
<dbReference type="EMBL" id="CU928163">
    <property type="protein sequence ID" value="CAR15654.1"/>
    <property type="molecule type" value="Genomic_DNA"/>
</dbReference>
<dbReference type="RefSeq" id="WP_001187551.1">
    <property type="nucleotide sequence ID" value="NC_011751.1"/>
</dbReference>
<dbReference type="RefSeq" id="YP_002415144.1">
    <property type="nucleotide sequence ID" value="NC_011751.1"/>
</dbReference>
<dbReference type="SMR" id="B7NFU7"/>
<dbReference type="STRING" id="585056.ECUMN_4530"/>
<dbReference type="KEGG" id="eum:ECUMN_4530"/>
<dbReference type="PATRIC" id="fig|585056.7.peg.4700"/>
<dbReference type="HOGENOM" id="CLU_016316_5_2_6"/>
<dbReference type="UniPathway" id="UPA00074">
    <property type="reaction ID" value="UER00133"/>
</dbReference>
<dbReference type="UniPathway" id="UPA00074">
    <property type="reaction ID" value="UER00135"/>
</dbReference>
<dbReference type="Proteomes" id="UP000007097">
    <property type="component" value="Chromosome"/>
</dbReference>
<dbReference type="GO" id="GO:0005829">
    <property type="term" value="C:cytosol"/>
    <property type="evidence" value="ECO:0007669"/>
    <property type="project" value="TreeGrafter"/>
</dbReference>
<dbReference type="GO" id="GO:0003937">
    <property type="term" value="F:IMP cyclohydrolase activity"/>
    <property type="evidence" value="ECO:0007669"/>
    <property type="project" value="UniProtKB-UniRule"/>
</dbReference>
<dbReference type="GO" id="GO:0004643">
    <property type="term" value="F:phosphoribosylaminoimidazolecarboxamide formyltransferase activity"/>
    <property type="evidence" value="ECO:0007669"/>
    <property type="project" value="UniProtKB-UniRule"/>
</dbReference>
<dbReference type="GO" id="GO:0006189">
    <property type="term" value="P:'de novo' IMP biosynthetic process"/>
    <property type="evidence" value="ECO:0007669"/>
    <property type="project" value="UniProtKB-UniRule"/>
</dbReference>
<dbReference type="CDD" id="cd01421">
    <property type="entry name" value="IMPCH"/>
    <property type="match status" value="1"/>
</dbReference>
<dbReference type="FunFam" id="3.40.140.20:FF:000001">
    <property type="entry name" value="Bifunctional purine biosynthesis protein PurH"/>
    <property type="match status" value="1"/>
</dbReference>
<dbReference type="FunFam" id="3.40.140.20:FF:000002">
    <property type="entry name" value="Bifunctional purine biosynthesis protein PurH"/>
    <property type="match status" value="1"/>
</dbReference>
<dbReference type="FunFam" id="3.40.50.1380:FF:000001">
    <property type="entry name" value="Bifunctional purine biosynthesis protein PurH"/>
    <property type="match status" value="1"/>
</dbReference>
<dbReference type="Gene3D" id="3.40.140.20">
    <property type="match status" value="2"/>
</dbReference>
<dbReference type="Gene3D" id="3.40.50.1380">
    <property type="entry name" value="Methylglyoxal synthase-like domain"/>
    <property type="match status" value="1"/>
</dbReference>
<dbReference type="HAMAP" id="MF_00139">
    <property type="entry name" value="PurH"/>
    <property type="match status" value="1"/>
</dbReference>
<dbReference type="InterPro" id="IPR024051">
    <property type="entry name" value="AICAR_Tfase_dup_dom_sf"/>
</dbReference>
<dbReference type="InterPro" id="IPR016193">
    <property type="entry name" value="Cytidine_deaminase-like"/>
</dbReference>
<dbReference type="InterPro" id="IPR011607">
    <property type="entry name" value="MGS-like_dom"/>
</dbReference>
<dbReference type="InterPro" id="IPR036914">
    <property type="entry name" value="MGS-like_dom_sf"/>
</dbReference>
<dbReference type="InterPro" id="IPR002695">
    <property type="entry name" value="PurH-like"/>
</dbReference>
<dbReference type="NCBIfam" id="NF002049">
    <property type="entry name" value="PRK00881.1"/>
    <property type="match status" value="1"/>
</dbReference>
<dbReference type="NCBIfam" id="TIGR00355">
    <property type="entry name" value="purH"/>
    <property type="match status" value="1"/>
</dbReference>
<dbReference type="PANTHER" id="PTHR11692:SF0">
    <property type="entry name" value="BIFUNCTIONAL PURINE BIOSYNTHESIS PROTEIN ATIC"/>
    <property type="match status" value="1"/>
</dbReference>
<dbReference type="PANTHER" id="PTHR11692">
    <property type="entry name" value="BIFUNCTIONAL PURINE BIOSYNTHESIS PROTEIN PURH"/>
    <property type="match status" value="1"/>
</dbReference>
<dbReference type="Pfam" id="PF01808">
    <property type="entry name" value="AICARFT_IMPCHas"/>
    <property type="match status" value="1"/>
</dbReference>
<dbReference type="Pfam" id="PF02142">
    <property type="entry name" value="MGS"/>
    <property type="match status" value="1"/>
</dbReference>
<dbReference type="PIRSF" id="PIRSF000414">
    <property type="entry name" value="AICARFT_IMPCHas"/>
    <property type="match status" value="1"/>
</dbReference>
<dbReference type="SMART" id="SM00798">
    <property type="entry name" value="AICARFT_IMPCHas"/>
    <property type="match status" value="1"/>
</dbReference>
<dbReference type="SMART" id="SM00851">
    <property type="entry name" value="MGS"/>
    <property type="match status" value="1"/>
</dbReference>
<dbReference type="SUPFAM" id="SSF53927">
    <property type="entry name" value="Cytidine deaminase-like"/>
    <property type="match status" value="1"/>
</dbReference>
<dbReference type="SUPFAM" id="SSF52335">
    <property type="entry name" value="Methylglyoxal synthase-like"/>
    <property type="match status" value="1"/>
</dbReference>
<dbReference type="PROSITE" id="PS51855">
    <property type="entry name" value="MGS"/>
    <property type="match status" value="1"/>
</dbReference>
<organism>
    <name type="scientific">Escherichia coli O17:K52:H18 (strain UMN026 / ExPEC)</name>
    <dbReference type="NCBI Taxonomy" id="585056"/>
    <lineage>
        <taxon>Bacteria</taxon>
        <taxon>Pseudomonadati</taxon>
        <taxon>Pseudomonadota</taxon>
        <taxon>Gammaproteobacteria</taxon>
        <taxon>Enterobacterales</taxon>
        <taxon>Enterobacteriaceae</taxon>
        <taxon>Escherichia</taxon>
    </lineage>
</organism>
<feature type="chain" id="PRO_1000192975" description="Bifunctional purine biosynthesis protein PurH">
    <location>
        <begin position="1"/>
        <end position="529"/>
    </location>
</feature>
<feature type="domain" description="MGS-like" evidence="2">
    <location>
        <begin position="1"/>
        <end position="148"/>
    </location>
</feature>
<feature type="modified residue" description="N6-acetyllysine" evidence="1">
    <location>
        <position position="287"/>
    </location>
</feature>
<evidence type="ECO:0000255" key="1">
    <source>
        <dbReference type="HAMAP-Rule" id="MF_00139"/>
    </source>
</evidence>
<evidence type="ECO:0000255" key="2">
    <source>
        <dbReference type="PROSITE-ProRule" id="PRU01202"/>
    </source>
</evidence>
<name>PUR9_ECOLU</name>
<protein>
    <recommendedName>
        <fullName evidence="1">Bifunctional purine biosynthesis protein PurH</fullName>
    </recommendedName>
    <domain>
        <recommendedName>
            <fullName evidence="1">Phosphoribosylaminoimidazolecarboxamide formyltransferase</fullName>
            <ecNumber evidence="1">2.1.2.3</ecNumber>
        </recommendedName>
        <alternativeName>
            <fullName evidence="1">AICAR transformylase</fullName>
        </alternativeName>
    </domain>
    <domain>
        <recommendedName>
            <fullName evidence="1">IMP cyclohydrolase</fullName>
            <ecNumber evidence="1">3.5.4.10</ecNumber>
        </recommendedName>
        <alternativeName>
            <fullName evidence="1">ATIC</fullName>
        </alternativeName>
        <alternativeName>
            <fullName evidence="1">IMP synthase</fullName>
        </alternativeName>
        <alternativeName>
            <fullName evidence="1">Inosinicase</fullName>
        </alternativeName>
    </domain>
</protein>
<accession>B7NFU7</accession>
<keyword id="KW-0007">Acetylation</keyword>
<keyword id="KW-0378">Hydrolase</keyword>
<keyword id="KW-0511">Multifunctional enzyme</keyword>
<keyword id="KW-0658">Purine biosynthesis</keyword>
<keyword id="KW-0808">Transferase</keyword>
<gene>
    <name evidence="1" type="primary">purH</name>
    <name type="ordered locus">ECUMN_4530</name>
</gene>
<reference key="1">
    <citation type="journal article" date="2009" name="PLoS Genet.">
        <title>Organised genome dynamics in the Escherichia coli species results in highly diverse adaptive paths.</title>
        <authorList>
            <person name="Touchon M."/>
            <person name="Hoede C."/>
            <person name="Tenaillon O."/>
            <person name="Barbe V."/>
            <person name="Baeriswyl S."/>
            <person name="Bidet P."/>
            <person name="Bingen E."/>
            <person name="Bonacorsi S."/>
            <person name="Bouchier C."/>
            <person name="Bouvet O."/>
            <person name="Calteau A."/>
            <person name="Chiapello H."/>
            <person name="Clermont O."/>
            <person name="Cruveiller S."/>
            <person name="Danchin A."/>
            <person name="Diard M."/>
            <person name="Dossat C."/>
            <person name="Karoui M.E."/>
            <person name="Frapy E."/>
            <person name="Garry L."/>
            <person name="Ghigo J.M."/>
            <person name="Gilles A.M."/>
            <person name="Johnson J."/>
            <person name="Le Bouguenec C."/>
            <person name="Lescat M."/>
            <person name="Mangenot S."/>
            <person name="Martinez-Jehanne V."/>
            <person name="Matic I."/>
            <person name="Nassif X."/>
            <person name="Oztas S."/>
            <person name="Petit M.A."/>
            <person name="Pichon C."/>
            <person name="Rouy Z."/>
            <person name="Ruf C.S."/>
            <person name="Schneider D."/>
            <person name="Tourret J."/>
            <person name="Vacherie B."/>
            <person name="Vallenet D."/>
            <person name="Medigue C."/>
            <person name="Rocha E.P.C."/>
            <person name="Denamur E."/>
        </authorList>
    </citation>
    <scope>NUCLEOTIDE SEQUENCE [LARGE SCALE GENOMIC DNA]</scope>
    <source>
        <strain>UMN026 / ExPEC</strain>
    </source>
</reference>
<comment type="catalytic activity">
    <reaction evidence="1">
        <text>(6R)-10-formyltetrahydrofolate + 5-amino-1-(5-phospho-beta-D-ribosyl)imidazole-4-carboxamide = 5-formamido-1-(5-phospho-D-ribosyl)imidazole-4-carboxamide + (6S)-5,6,7,8-tetrahydrofolate</text>
        <dbReference type="Rhea" id="RHEA:22192"/>
        <dbReference type="ChEBI" id="CHEBI:57453"/>
        <dbReference type="ChEBI" id="CHEBI:58467"/>
        <dbReference type="ChEBI" id="CHEBI:58475"/>
        <dbReference type="ChEBI" id="CHEBI:195366"/>
        <dbReference type="EC" id="2.1.2.3"/>
    </reaction>
</comment>
<comment type="catalytic activity">
    <reaction evidence="1">
        <text>IMP + H2O = 5-formamido-1-(5-phospho-D-ribosyl)imidazole-4-carboxamide</text>
        <dbReference type="Rhea" id="RHEA:18445"/>
        <dbReference type="ChEBI" id="CHEBI:15377"/>
        <dbReference type="ChEBI" id="CHEBI:58053"/>
        <dbReference type="ChEBI" id="CHEBI:58467"/>
        <dbReference type="EC" id="3.5.4.10"/>
    </reaction>
</comment>
<comment type="pathway">
    <text evidence="1">Purine metabolism; IMP biosynthesis via de novo pathway; 5-formamido-1-(5-phospho-D-ribosyl)imidazole-4-carboxamide from 5-amino-1-(5-phospho-D-ribosyl)imidazole-4-carboxamide (10-formyl THF route): step 1/1.</text>
</comment>
<comment type="pathway">
    <text evidence="1">Purine metabolism; IMP biosynthesis via de novo pathway; IMP from 5-formamido-1-(5-phospho-D-ribosyl)imidazole-4-carboxamide: step 1/1.</text>
</comment>
<comment type="domain">
    <text evidence="1">The IMP cyclohydrolase activity resides in the N-terminal region.</text>
</comment>
<comment type="similarity">
    <text evidence="1">Belongs to the PurH family.</text>
</comment>
<proteinExistence type="inferred from homology"/>